<reference evidence="4" key="1">
    <citation type="journal article" date="1995" name="Eur. J. Biochem.">
        <title>Ribosome-inactivating proteins (RNA N-glycosidases) from the seeds of Saponaria ocymoides and Vaccaria pyramidata.</title>
        <authorList>
            <person name="Bolognesi A."/>
            <person name="Olivieri F."/>
            <person name="Battelli M.G."/>
            <person name="Barbieri L."/>
            <person name="Falasca A.I."/>
            <person name="Parente A."/>
            <person name="Del Vecchio Blanco F."/>
            <person name="Stirpe F."/>
        </authorList>
    </citation>
    <scope>PROTEIN SEQUENCE</scope>
    <scope>FUNCTION</scope>
    <scope>CATALYTIC ACTIVITY</scope>
    <scope>TISSUE SPECIFICITY</scope>
    <scope>TOXIC DOSE</scope>
</reference>
<proteinExistence type="evidence at protein level"/>
<comment type="function">
    <text evidence="1">Exhibits N-glycosylase activity (PubMed:7737197). Catalyzes the release of one adenine from a ribosome (PubMed:7737197). Acts as a ribosome-inactivating protein and inhibits protein synthesis in a rabbit-reticulocyte lysate system and in various cell lines (in vitro) (PubMed:7737197).</text>
</comment>
<comment type="catalytic activity">
    <reaction evidence="1">
        <text>Endohydrolysis of the N-glycosidic bond at one specific adenosine on the 28S rRNA.</text>
        <dbReference type="EC" id="3.2.2.22"/>
    </reaction>
</comment>
<comment type="tissue specificity">
    <text evidence="1">Expressed in seeds.</text>
</comment>
<comment type="toxic dose">
    <text evidence="1">LD(50) of 13.5 mg/kg in mouse.</text>
</comment>
<comment type="similarity">
    <text evidence="3">Belongs to the ribosome-inactivating protein family. Type 1 RIP subfamily.</text>
</comment>
<feature type="chain" id="PRO_0000456723" description="rRNA N-glycosylase">
    <location>
        <begin position="1" status="less than"/>
        <end position="30" status="greater than"/>
    </location>
</feature>
<feature type="non-terminal residue" evidence="2">
    <location>
        <position position="1"/>
    </location>
</feature>
<feature type="non-terminal residue" evidence="2">
    <location>
        <position position="30"/>
    </location>
</feature>
<dbReference type="EC" id="3.2.2.22" evidence="1"/>
<dbReference type="PIR" id="S69124">
    <property type="entry name" value="S69124"/>
</dbReference>
<dbReference type="SMR" id="Q7M1L7"/>
<dbReference type="GO" id="GO:0030598">
    <property type="term" value="F:rRNA N-glycosylase activity"/>
    <property type="evidence" value="ECO:0007669"/>
    <property type="project" value="UniProtKB-EC"/>
</dbReference>
<dbReference type="GO" id="GO:0090729">
    <property type="term" value="F:toxin activity"/>
    <property type="evidence" value="ECO:0007669"/>
    <property type="project" value="UniProtKB-KW"/>
</dbReference>
<dbReference type="GO" id="GO:0006952">
    <property type="term" value="P:defense response"/>
    <property type="evidence" value="ECO:0007669"/>
    <property type="project" value="UniProtKB-KW"/>
</dbReference>
<dbReference type="GO" id="GO:0017148">
    <property type="term" value="P:negative regulation of translation"/>
    <property type="evidence" value="ECO:0007669"/>
    <property type="project" value="UniProtKB-KW"/>
</dbReference>
<dbReference type="InterPro" id="IPR036041">
    <property type="entry name" value="Ribosome-inact_prot_sf"/>
</dbReference>
<dbReference type="SUPFAM" id="SSF56371">
    <property type="entry name" value="Ribosome inactivating proteins (RIP)"/>
    <property type="match status" value="1"/>
</dbReference>
<sequence>VTSITLNLANPTAGQYSSFVDKIRNNVRDP</sequence>
<name>RIP1_SAPOC</name>
<protein>
    <recommendedName>
        <fullName evidence="3">rRNA N-glycosylase</fullName>
        <ecNumber evidence="1">3.2.2.22</ecNumber>
    </recommendedName>
    <alternativeName>
        <fullName evidence="2">Ribosome-inactivating protein</fullName>
    </alternativeName>
    <alternativeName>
        <fullName evidence="2">rRNA N-glycosidase</fullName>
    </alternativeName>
</protein>
<organism>
    <name type="scientific">Saponaria ocymoides</name>
    <name type="common">Rock soapwort</name>
    <dbReference type="NCBI Taxonomy" id="42033"/>
    <lineage>
        <taxon>Eukaryota</taxon>
        <taxon>Viridiplantae</taxon>
        <taxon>Streptophyta</taxon>
        <taxon>Embryophyta</taxon>
        <taxon>Tracheophyta</taxon>
        <taxon>Spermatophyta</taxon>
        <taxon>Magnoliopsida</taxon>
        <taxon>eudicotyledons</taxon>
        <taxon>Gunneridae</taxon>
        <taxon>Pentapetalae</taxon>
        <taxon>Caryophyllales</taxon>
        <taxon>Caryophyllaceae</taxon>
        <taxon>Caryophylleae</taxon>
        <taxon>Saponaria</taxon>
    </lineage>
</organism>
<evidence type="ECO:0000269" key="1">
    <source>
    </source>
</evidence>
<evidence type="ECO:0000303" key="2">
    <source>
    </source>
</evidence>
<evidence type="ECO:0000305" key="3"/>
<evidence type="ECO:0000312" key="4">
    <source>
        <dbReference type="PIR" id="S69124"/>
    </source>
</evidence>
<keyword id="KW-0903">Direct protein sequencing</keyword>
<keyword id="KW-0378">Hydrolase</keyword>
<keyword id="KW-0611">Plant defense</keyword>
<keyword id="KW-0652">Protein synthesis inhibitor</keyword>
<keyword id="KW-0800">Toxin</keyword>
<accession>Q7M1L7</accession>